<reference key="1">
    <citation type="journal article" date="1990" name="EMBO J.">
        <title>The secD locus of E.coli codes for two membrane proteins required for protein export.</title>
        <authorList>
            <person name="Gardel C."/>
            <person name="Johnson K."/>
            <person name="Jacq A."/>
            <person name="Beckwith J."/>
        </authorList>
    </citation>
    <scope>NUCLEOTIDE SEQUENCE [GENOMIC DNA]</scope>
    <source>
        <strain>K12</strain>
    </source>
</reference>
<reference key="2">
    <citation type="journal article" date="1990" name="EMBO J.">
        <authorList>
            <person name="Gardel C."/>
            <person name="Johnson K."/>
            <person name="Jacq A."/>
            <person name="Beckwith J."/>
        </authorList>
    </citation>
    <scope>ERRATUM OF PUBMED:2170107</scope>
</reference>
<reference key="3">
    <citation type="submission" date="1997-01" db="EMBL/GenBank/DDBJ databases">
        <title>Sequence of minutes 4-25 of Escherichia coli.</title>
        <authorList>
            <person name="Chung E."/>
            <person name="Allen E."/>
            <person name="Araujo R."/>
            <person name="Aparicio A.M."/>
            <person name="Davis K."/>
            <person name="Duncan M."/>
            <person name="Federspiel N."/>
            <person name="Hyman R."/>
            <person name="Kalman S."/>
            <person name="Komp C."/>
            <person name="Kurdi O."/>
            <person name="Lew H."/>
            <person name="Lin D."/>
            <person name="Namath A."/>
            <person name="Oefner P."/>
            <person name="Roberts D."/>
            <person name="Schramm S."/>
            <person name="Davis R.W."/>
        </authorList>
    </citation>
    <scope>NUCLEOTIDE SEQUENCE [LARGE SCALE GENOMIC DNA]</scope>
    <source>
        <strain>K12 / MG1655 / ATCC 47076</strain>
    </source>
</reference>
<reference key="4">
    <citation type="journal article" date="1997" name="Science">
        <title>The complete genome sequence of Escherichia coli K-12.</title>
        <authorList>
            <person name="Blattner F.R."/>
            <person name="Plunkett G. III"/>
            <person name="Bloch C.A."/>
            <person name="Perna N.T."/>
            <person name="Burland V."/>
            <person name="Riley M."/>
            <person name="Collado-Vides J."/>
            <person name="Glasner J.D."/>
            <person name="Rode C.K."/>
            <person name="Mayhew G.F."/>
            <person name="Gregor J."/>
            <person name="Davis N.W."/>
            <person name="Kirkpatrick H.A."/>
            <person name="Goeden M.A."/>
            <person name="Rose D.J."/>
            <person name="Mau B."/>
            <person name="Shao Y."/>
        </authorList>
    </citation>
    <scope>NUCLEOTIDE SEQUENCE [LARGE SCALE GENOMIC DNA]</scope>
    <source>
        <strain>K12 / MG1655 / ATCC 47076</strain>
    </source>
</reference>
<reference key="5">
    <citation type="journal article" date="2006" name="Mol. Syst. Biol.">
        <title>Highly accurate genome sequences of Escherichia coli K-12 strains MG1655 and W3110.</title>
        <authorList>
            <person name="Hayashi K."/>
            <person name="Morooka N."/>
            <person name="Yamamoto Y."/>
            <person name="Fujita K."/>
            <person name="Isono K."/>
            <person name="Choi S."/>
            <person name="Ohtsubo E."/>
            <person name="Baba T."/>
            <person name="Wanner B.L."/>
            <person name="Mori H."/>
            <person name="Horiuchi T."/>
        </authorList>
    </citation>
    <scope>NUCLEOTIDE SEQUENCE [LARGE SCALE GENOMIC DNA]</scope>
    <source>
        <strain>K12 / W3110 / ATCC 27325 / DSM 5911</strain>
    </source>
</reference>
<evidence type="ECO:0000305" key="1"/>
<name>YAJD_ECOLI</name>
<feature type="chain" id="PRO_0000168606" description="Putative HNH nuclease YajD">
    <location>
        <begin position="1"/>
        <end position="115"/>
    </location>
</feature>
<feature type="domain" description="HNH">
    <location>
        <begin position="27"/>
        <end position="75"/>
    </location>
</feature>
<feature type="sequence conflict" description="In Ref. 1; CAA39636." evidence="1" ref="1">
    <original>AMMNKKK</original>
    <variation>G</variation>
    <location>
        <begin position="109"/>
        <end position="115"/>
    </location>
</feature>
<keyword id="KW-0378">Hydrolase</keyword>
<keyword id="KW-0540">Nuclease</keyword>
<keyword id="KW-1185">Reference proteome</keyword>
<protein>
    <recommendedName>
        <fullName>Putative HNH nuclease YajD</fullName>
        <ecNumber>3.1.-.-</ecNumber>
    </recommendedName>
</protein>
<dbReference type="EC" id="3.1.-.-"/>
<dbReference type="EMBL" id="X56175">
    <property type="protein sequence ID" value="CAA39636.1"/>
    <property type="molecule type" value="Genomic_DNA"/>
</dbReference>
<dbReference type="EMBL" id="U82664">
    <property type="protein sequence ID" value="AAB40166.1"/>
    <property type="molecule type" value="Genomic_DNA"/>
</dbReference>
<dbReference type="EMBL" id="U00096">
    <property type="protein sequence ID" value="AAC73513.1"/>
    <property type="molecule type" value="Genomic_DNA"/>
</dbReference>
<dbReference type="EMBL" id="AP009048">
    <property type="protein sequence ID" value="BAE76190.1"/>
    <property type="molecule type" value="Genomic_DNA"/>
</dbReference>
<dbReference type="PIR" id="B64770">
    <property type="entry name" value="B64770"/>
</dbReference>
<dbReference type="RefSeq" id="NP_414944.1">
    <property type="nucleotide sequence ID" value="NC_000913.3"/>
</dbReference>
<dbReference type="RefSeq" id="WP_000974813.1">
    <property type="nucleotide sequence ID" value="NZ_STEB01000007.1"/>
</dbReference>
<dbReference type="BioGRID" id="4262189">
    <property type="interactions" value="26"/>
</dbReference>
<dbReference type="FunCoup" id="P0AAQ2">
    <property type="interactions" value="21"/>
</dbReference>
<dbReference type="IntAct" id="P0AAQ2">
    <property type="interactions" value="11"/>
</dbReference>
<dbReference type="STRING" id="511145.b0410"/>
<dbReference type="jPOST" id="P0AAQ2"/>
<dbReference type="PaxDb" id="511145-b0410"/>
<dbReference type="EnsemblBacteria" id="AAC73513">
    <property type="protein sequence ID" value="AAC73513"/>
    <property type="gene ID" value="b0410"/>
</dbReference>
<dbReference type="GeneID" id="93777050"/>
<dbReference type="GeneID" id="945051"/>
<dbReference type="KEGG" id="ecj:JW0400"/>
<dbReference type="KEGG" id="eco:b0410"/>
<dbReference type="KEGG" id="ecoc:C3026_01995"/>
<dbReference type="PATRIC" id="fig|511145.12.peg.426"/>
<dbReference type="EchoBASE" id="EB1089"/>
<dbReference type="eggNOG" id="COG1403">
    <property type="taxonomic scope" value="Bacteria"/>
</dbReference>
<dbReference type="HOGENOM" id="CLU_136125_1_0_6"/>
<dbReference type="InParanoid" id="P0AAQ2"/>
<dbReference type="OMA" id="CHDNEHA"/>
<dbReference type="OrthoDB" id="9796565at2"/>
<dbReference type="PhylomeDB" id="P0AAQ2"/>
<dbReference type="BioCyc" id="EcoCyc:EG11097-MONOMER"/>
<dbReference type="PRO" id="PR:P0AAQ2"/>
<dbReference type="Proteomes" id="UP000000625">
    <property type="component" value="Chromosome"/>
</dbReference>
<dbReference type="GO" id="GO:0005829">
    <property type="term" value="C:cytosol"/>
    <property type="evidence" value="ECO:0000314"/>
    <property type="project" value="EcoCyc"/>
</dbReference>
<dbReference type="GO" id="GO:0004519">
    <property type="term" value="F:endonuclease activity"/>
    <property type="evidence" value="ECO:0007669"/>
    <property type="project" value="InterPro"/>
</dbReference>
<dbReference type="GO" id="GO:0003676">
    <property type="term" value="F:nucleic acid binding"/>
    <property type="evidence" value="ECO:0007669"/>
    <property type="project" value="InterPro"/>
</dbReference>
<dbReference type="GO" id="GO:0008270">
    <property type="term" value="F:zinc ion binding"/>
    <property type="evidence" value="ECO:0007669"/>
    <property type="project" value="InterPro"/>
</dbReference>
<dbReference type="CDD" id="cd00085">
    <property type="entry name" value="HNHc"/>
    <property type="match status" value="1"/>
</dbReference>
<dbReference type="Gene3D" id="1.10.30.50">
    <property type="match status" value="1"/>
</dbReference>
<dbReference type="InterPro" id="IPR002711">
    <property type="entry name" value="HNH"/>
</dbReference>
<dbReference type="InterPro" id="IPR003615">
    <property type="entry name" value="HNH_nuc"/>
</dbReference>
<dbReference type="NCBIfam" id="NF008448">
    <property type="entry name" value="PRK11295.1"/>
    <property type="match status" value="1"/>
</dbReference>
<dbReference type="PANTHER" id="PTHR41286">
    <property type="entry name" value="HNH NUCLEASE YAJD-RELATED"/>
    <property type="match status" value="1"/>
</dbReference>
<dbReference type="PANTHER" id="PTHR41286:SF1">
    <property type="entry name" value="HNH NUCLEASE YAJD-RELATED"/>
    <property type="match status" value="1"/>
</dbReference>
<dbReference type="Pfam" id="PF01844">
    <property type="entry name" value="HNH"/>
    <property type="match status" value="1"/>
</dbReference>
<dbReference type="SMART" id="SM00507">
    <property type="entry name" value="HNHc"/>
    <property type="match status" value="1"/>
</dbReference>
<comment type="similarity">
    <text evidence="1">Belongs to the HNH nuclease family.</text>
</comment>
<accession>P0AAQ2</accession>
<accession>P19678</accession>
<accession>P77666</accession>
<accession>Q2MC16</accession>
<sequence>MAIIPKNYARLESGYREKALKIYPWVCGRCSREFVYSNLRELTVHHIDHDHTNNPEDGSNWELLCLYCHDHEHSKYTEADQYGTTVIAGEDAQKDVGEAKYNPFADLKAMMNKKK</sequence>
<gene>
    <name type="primary">yajD</name>
    <name type="ordered locus">b0410</name>
    <name type="ordered locus">JW0400</name>
</gene>
<proteinExistence type="inferred from homology"/>
<organism>
    <name type="scientific">Escherichia coli (strain K12)</name>
    <dbReference type="NCBI Taxonomy" id="83333"/>
    <lineage>
        <taxon>Bacteria</taxon>
        <taxon>Pseudomonadati</taxon>
        <taxon>Pseudomonadota</taxon>
        <taxon>Gammaproteobacteria</taxon>
        <taxon>Enterobacterales</taxon>
        <taxon>Enterobacteriaceae</taxon>
        <taxon>Escherichia</taxon>
    </lineage>
</organism>